<gene>
    <name evidence="1" type="primary">disA</name>
    <name type="ordered locus">BC_0104</name>
</gene>
<name>DISA_BACCR</name>
<proteinExistence type="inferred from homology"/>
<protein>
    <recommendedName>
        <fullName evidence="1">DNA integrity scanning protein DisA</fullName>
    </recommendedName>
    <alternativeName>
        <fullName evidence="1">Cyclic di-AMP synthase</fullName>
        <shortName evidence="1">c-di-AMP synthase</shortName>
    </alternativeName>
    <alternativeName>
        <fullName evidence="1">Diadenylate cyclase</fullName>
        <ecNumber evidence="1">2.7.7.85</ecNumber>
    </alternativeName>
</protein>
<evidence type="ECO:0000255" key="1">
    <source>
        <dbReference type="HAMAP-Rule" id="MF_01438"/>
    </source>
</evidence>
<evidence type="ECO:0000255" key="2">
    <source>
        <dbReference type="PROSITE-ProRule" id="PRU01130"/>
    </source>
</evidence>
<dbReference type="EC" id="2.7.7.85" evidence="1"/>
<dbReference type="EMBL" id="AE016877">
    <property type="protein sequence ID" value="AAP07186.1"/>
    <property type="molecule type" value="Genomic_DNA"/>
</dbReference>
<dbReference type="RefSeq" id="NP_829985.1">
    <property type="nucleotide sequence ID" value="NC_004722.1"/>
</dbReference>
<dbReference type="RefSeq" id="WP_000392163.1">
    <property type="nucleotide sequence ID" value="NZ_CP138336.1"/>
</dbReference>
<dbReference type="SMR" id="Q81J64"/>
<dbReference type="STRING" id="226900.BC_0104"/>
<dbReference type="KEGG" id="bce:BC0104"/>
<dbReference type="PATRIC" id="fig|226900.8.peg.106"/>
<dbReference type="HOGENOM" id="CLU_787128_0_0_9"/>
<dbReference type="OrthoDB" id="41841at2"/>
<dbReference type="Proteomes" id="UP000001417">
    <property type="component" value="Chromosome"/>
</dbReference>
<dbReference type="GO" id="GO:0004016">
    <property type="term" value="F:adenylate cyclase activity"/>
    <property type="evidence" value="ECO:0000318"/>
    <property type="project" value="GO_Central"/>
</dbReference>
<dbReference type="GO" id="GO:0005524">
    <property type="term" value="F:ATP binding"/>
    <property type="evidence" value="ECO:0007669"/>
    <property type="project" value="UniProtKB-UniRule"/>
</dbReference>
<dbReference type="GO" id="GO:0106408">
    <property type="term" value="F:diadenylate cyclase activity"/>
    <property type="evidence" value="ECO:0007669"/>
    <property type="project" value="UniProtKB-EC"/>
</dbReference>
<dbReference type="GO" id="GO:0003677">
    <property type="term" value="F:DNA binding"/>
    <property type="evidence" value="ECO:0007669"/>
    <property type="project" value="UniProtKB-UniRule"/>
</dbReference>
<dbReference type="GO" id="GO:0006281">
    <property type="term" value="P:DNA repair"/>
    <property type="evidence" value="ECO:0007669"/>
    <property type="project" value="UniProtKB-UniRule"/>
</dbReference>
<dbReference type="FunFam" id="1.10.150.20:FF:000023">
    <property type="entry name" value="DNA integrity scanning protein DisA"/>
    <property type="match status" value="1"/>
</dbReference>
<dbReference type="FunFam" id="1.20.1260.110:FF:000001">
    <property type="entry name" value="DNA integrity scanning protein DisA"/>
    <property type="match status" value="1"/>
</dbReference>
<dbReference type="FunFam" id="3.40.1700.10:FF:000001">
    <property type="entry name" value="DNA integrity scanning protein DisA"/>
    <property type="match status" value="1"/>
</dbReference>
<dbReference type="Gene3D" id="1.10.150.20">
    <property type="entry name" value="5' to 3' exonuclease, C-terminal subdomain"/>
    <property type="match status" value="1"/>
</dbReference>
<dbReference type="Gene3D" id="1.20.1260.110">
    <property type="entry name" value="DNA integrity scanning linker region"/>
    <property type="match status" value="1"/>
</dbReference>
<dbReference type="Gene3D" id="3.40.1700.10">
    <property type="entry name" value="DNA integrity scanning protein, DisA, N-terminal domain"/>
    <property type="match status" value="1"/>
</dbReference>
<dbReference type="HAMAP" id="MF_01438">
    <property type="entry name" value="DisA"/>
    <property type="match status" value="1"/>
</dbReference>
<dbReference type="InterPro" id="IPR050338">
    <property type="entry name" value="DisA"/>
</dbReference>
<dbReference type="InterPro" id="IPR038331">
    <property type="entry name" value="DisA_sf"/>
</dbReference>
<dbReference type="InterPro" id="IPR036888">
    <property type="entry name" value="DNA_integrity_DisA_N_sf"/>
</dbReference>
<dbReference type="InterPro" id="IPR018906">
    <property type="entry name" value="DNA_integrity_scan_DisA_link"/>
</dbReference>
<dbReference type="InterPro" id="IPR003390">
    <property type="entry name" value="DNA_integrity_scan_DisA_N"/>
</dbReference>
<dbReference type="InterPro" id="IPR023763">
    <property type="entry name" value="DNA_integrity_scanning_protein"/>
</dbReference>
<dbReference type="InterPro" id="IPR010994">
    <property type="entry name" value="RuvA_2-like"/>
</dbReference>
<dbReference type="NCBIfam" id="NF010009">
    <property type="entry name" value="PRK13482.1"/>
    <property type="match status" value="1"/>
</dbReference>
<dbReference type="PANTHER" id="PTHR34185">
    <property type="entry name" value="DIADENYLATE CYCLASE"/>
    <property type="match status" value="1"/>
</dbReference>
<dbReference type="PANTHER" id="PTHR34185:SF3">
    <property type="entry name" value="DNA INTEGRITY SCANNING PROTEIN DISA"/>
    <property type="match status" value="1"/>
</dbReference>
<dbReference type="Pfam" id="PF02457">
    <property type="entry name" value="DAC"/>
    <property type="match status" value="1"/>
</dbReference>
<dbReference type="Pfam" id="PF10635">
    <property type="entry name" value="DisA-linker"/>
    <property type="match status" value="1"/>
</dbReference>
<dbReference type="SUPFAM" id="SSF47781">
    <property type="entry name" value="RuvA domain 2-like"/>
    <property type="match status" value="1"/>
</dbReference>
<dbReference type="SUPFAM" id="SSF143597">
    <property type="entry name" value="YojJ-like"/>
    <property type="match status" value="1"/>
</dbReference>
<dbReference type="PROSITE" id="PS51794">
    <property type="entry name" value="DAC"/>
    <property type="match status" value="1"/>
</dbReference>
<accession>Q81J64</accession>
<sequence length="357" mass="40041">MEENKQRVKSMINILQLVAPGTPLREGIDNVLRAQTGGLIVLGYNEQIKSIVDGGFHINCAFSPASLYELAKMDGALILNETGSKILIANAQLVPDSSIDSIETGMRHRTAERVAKQTGSLVVAISQRRNVITLYQGNLRYTLKDIGVILTKANQAIQTLEKYKAVWNDGITNLGILEFEEVVTMSEVVHVLHSVEMVLRIKNEILSYIHELGTEGRLIRLQLTELLADLEAEAALLIKDYHQEKTQDHHQILKKLQDLANTQLLEDSDLVKLLGYPGQTSLEESVTPRGYRITSKISRVPPLIIENLINRFKTLQGVCRATINELDDVEGIGEVRAKKIREGLKRIQEHLYMSRHN</sequence>
<keyword id="KW-0067">ATP-binding</keyword>
<keyword id="KW-0227">DNA damage</keyword>
<keyword id="KW-0234">DNA repair</keyword>
<keyword id="KW-0238">DNA-binding</keyword>
<keyword id="KW-0460">Magnesium</keyword>
<keyword id="KW-0547">Nucleotide-binding</keyword>
<keyword id="KW-0548">Nucleotidyltransferase</keyword>
<keyword id="KW-1185">Reference proteome</keyword>
<keyword id="KW-0808">Transferase</keyword>
<comment type="function">
    <text evidence="1">Participates in a DNA-damage check-point that is active prior to asymmetric division when DNA is damaged. DisA forms globular foci that rapidly scan along the chromosomes during sporulation, searching for lesions. When a lesion is present, DisA pauses at the lesion site. This triggers a cellular response that culminates in a temporary block in sporulation initiation.</text>
</comment>
<comment type="function">
    <text evidence="1">Also has diadenylate cyclase activity, catalyzing the condensation of 2 ATP molecules into cyclic di-AMP (c-di-AMP). c-di-AMP acts as a signaling molecule that couples DNA integrity with progression of sporulation. The rise in c-di-AMP level generated by DisA while scanning the chromosome, operates as a positive signal that advances sporulation; upon encountering a lesion, the DisA focus arrests at the damaged site and halts c-di-AMP synthesis.</text>
</comment>
<comment type="catalytic activity">
    <reaction evidence="1">
        <text>2 ATP = 3',3'-c-di-AMP + 2 diphosphate</text>
        <dbReference type="Rhea" id="RHEA:35655"/>
        <dbReference type="ChEBI" id="CHEBI:30616"/>
        <dbReference type="ChEBI" id="CHEBI:33019"/>
        <dbReference type="ChEBI" id="CHEBI:71500"/>
        <dbReference type="EC" id="2.7.7.85"/>
    </reaction>
</comment>
<comment type="cofactor">
    <cofactor evidence="1">
        <name>Mg(2+)</name>
        <dbReference type="ChEBI" id="CHEBI:18420"/>
    </cofactor>
</comment>
<comment type="subunit">
    <text evidence="1">Homooctamer.</text>
</comment>
<comment type="similarity">
    <text evidence="1">Belongs to the DisA family.</text>
</comment>
<organism>
    <name type="scientific">Bacillus cereus (strain ATCC 14579 / DSM 31 / CCUG 7414 / JCM 2152 / NBRC 15305 / NCIMB 9373 / NCTC 2599 / NRRL B-3711)</name>
    <dbReference type="NCBI Taxonomy" id="226900"/>
    <lineage>
        <taxon>Bacteria</taxon>
        <taxon>Bacillati</taxon>
        <taxon>Bacillota</taxon>
        <taxon>Bacilli</taxon>
        <taxon>Bacillales</taxon>
        <taxon>Bacillaceae</taxon>
        <taxon>Bacillus</taxon>
        <taxon>Bacillus cereus group</taxon>
    </lineage>
</organism>
<reference key="1">
    <citation type="journal article" date="2003" name="Nature">
        <title>Genome sequence of Bacillus cereus and comparative analysis with Bacillus anthracis.</title>
        <authorList>
            <person name="Ivanova N."/>
            <person name="Sorokin A."/>
            <person name="Anderson I."/>
            <person name="Galleron N."/>
            <person name="Candelon B."/>
            <person name="Kapatral V."/>
            <person name="Bhattacharyya A."/>
            <person name="Reznik G."/>
            <person name="Mikhailova N."/>
            <person name="Lapidus A."/>
            <person name="Chu L."/>
            <person name="Mazur M."/>
            <person name="Goltsman E."/>
            <person name="Larsen N."/>
            <person name="D'Souza M."/>
            <person name="Walunas T."/>
            <person name="Grechkin Y."/>
            <person name="Pusch G."/>
            <person name="Haselkorn R."/>
            <person name="Fonstein M."/>
            <person name="Ehrlich S.D."/>
            <person name="Overbeek R."/>
            <person name="Kyrpides N.C."/>
        </authorList>
    </citation>
    <scope>NUCLEOTIDE SEQUENCE [LARGE SCALE GENOMIC DNA]</scope>
    <source>
        <strain>ATCC 14579 / DSM 31 / CCUG 7414 / JCM 2152 / NBRC 15305 / NCIMB 9373 / NCTC 2599 / NRRL B-3711</strain>
    </source>
</reference>
<feature type="chain" id="PRO_0000255633" description="DNA integrity scanning protein DisA">
    <location>
        <begin position="1"/>
        <end position="357"/>
    </location>
</feature>
<feature type="domain" description="DAC" evidence="2">
    <location>
        <begin position="8"/>
        <end position="146"/>
    </location>
</feature>
<feature type="binding site" evidence="1">
    <location>
        <position position="75"/>
    </location>
    <ligand>
        <name>ATP</name>
        <dbReference type="ChEBI" id="CHEBI:30616"/>
    </ligand>
</feature>
<feature type="binding site" evidence="1">
    <location>
        <position position="93"/>
    </location>
    <ligand>
        <name>ATP</name>
        <dbReference type="ChEBI" id="CHEBI:30616"/>
    </ligand>
</feature>
<feature type="binding site" evidence="1">
    <location>
        <begin position="106"/>
        <end position="110"/>
    </location>
    <ligand>
        <name>ATP</name>
        <dbReference type="ChEBI" id="CHEBI:30616"/>
    </ligand>
</feature>